<dbReference type="EC" id="6.3.2.13" evidence="1"/>
<dbReference type="EMBL" id="AL591688">
    <property type="protein sequence ID" value="CAC46760.1"/>
    <property type="molecule type" value="Genomic_DNA"/>
</dbReference>
<dbReference type="RefSeq" id="NP_386287.1">
    <property type="nucleotide sequence ID" value="NC_003047.1"/>
</dbReference>
<dbReference type="RefSeq" id="WP_010969750.1">
    <property type="nucleotide sequence ID" value="NC_003047.1"/>
</dbReference>
<dbReference type="SMR" id="Q92NL6"/>
<dbReference type="EnsemblBacteria" id="CAC46760">
    <property type="protein sequence ID" value="CAC46760"/>
    <property type="gene ID" value="SMc01861"/>
</dbReference>
<dbReference type="KEGG" id="sme:SMc01861"/>
<dbReference type="PATRIC" id="fig|266834.11.peg.3647"/>
<dbReference type="eggNOG" id="COG0769">
    <property type="taxonomic scope" value="Bacteria"/>
</dbReference>
<dbReference type="HOGENOM" id="CLU_022291_3_1_5"/>
<dbReference type="OrthoDB" id="9800958at2"/>
<dbReference type="UniPathway" id="UPA00219"/>
<dbReference type="Proteomes" id="UP000001976">
    <property type="component" value="Chromosome"/>
</dbReference>
<dbReference type="GO" id="GO:0005737">
    <property type="term" value="C:cytoplasm"/>
    <property type="evidence" value="ECO:0007669"/>
    <property type="project" value="UniProtKB-SubCell"/>
</dbReference>
<dbReference type="GO" id="GO:0005524">
    <property type="term" value="F:ATP binding"/>
    <property type="evidence" value="ECO:0007669"/>
    <property type="project" value="UniProtKB-UniRule"/>
</dbReference>
<dbReference type="GO" id="GO:0000287">
    <property type="term" value="F:magnesium ion binding"/>
    <property type="evidence" value="ECO:0007669"/>
    <property type="project" value="UniProtKB-UniRule"/>
</dbReference>
<dbReference type="GO" id="GO:0008765">
    <property type="term" value="F:UDP-N-acetylmuramoylalanyl-D-glutamate-2,6-diaminopimelate ligase activity"/>
    <property type="evidence" value="ECO:0007669"/>
    <property type="project" value="UniProtKB-UniRule"/>
</dbReference>
<dbReference type="GO" id="GO:0051301">
    <property type="term" value="P:cell division"/>
    <property type="evidence" value="ECO:0007669"/>
    <property type="project" value="UniProtKB-KW"/>
</dbReference>
<dbReference type="GO" id="GO:0071555">
    <property type="term" value="P:cell wall organization"/>
    <property type="evidence" value="ECO:0007669"/>
    <property type="project" value="UniProtKB-KW"/>
</dbReference>
<dbReference type="GO" id="GO:0009252">
    <property type="term" value="P:peptidoglycan biosynthetic process"/>
    <property type="evidence" value="ECO:0007669"/>
    <property type="project" value="UniProtKB-UniRule"/>
</dbReference>
<dbReference type="GO" id="GO:0008360">
    <property type="term" value="P:regulation of cell shape"/>
    <property type="evidence" value="ECO:0007669"/>
    <property type="project" value="UniProtKB-KW"/>
</dbReference>
<dbReference type="Gene3D" id="3.90.190.20">
    <property type="entry name" value="Mur ligase, C-terminal domain"/>
    <property type="match status" value="1"/>
</dbReference>
<dbReference type="Gene3D" id="3.40.1190.10">
    <property type="entry name" value="Mur-like, catalytic domain"/>
    <property type="match status" value="1"/>
</dbReference>
<dbReference type="Gene3D" id="3.40.1390.10">
    <property type="entry name" value="MurE/MurF, N-terminal domain"/>
    <property type="match status" value="1"/>
</dbReference>
<dbReference type="HAMAP" id="MF_00208">
    <property type="entry name" value="MurE"/>
    <property type="match status" value="1"/>
</dbReference>
<dbReference type="InterPro" id="IPR036565">
    <property type="entry name" value="Mur-like_cat_sf"/>
</dbReference>
<dbReference type="InterPro" id="IPR004101">
    <property type="entry name" value="Mur_ligase_C"/>
</dbReference>
<dbReference type="InterPro" id="IPR036615">
    <property type="entry name" value="Mur_ligase_C_dom_sf"/>
</dbReference>
<dbReference type="InterPro" id="IPR013221">
    <property type="entry name" value="Mur_ligase_cen"/>
</dbReference>
<dbReference type="InterPro" id="IPR000713">
    <property type="entry name" value="Mur_ligase_N"/>
</dbReference>
<dbReference type="InterPro" id="IPR035911">
    <property type="entry name" value="MurE/MurF_N"/>
</dbReference>
<dbReference type="InterPro" id="IPR005761">
    <property type="entry name" value="UDP-N-AcMur-Glu-dNH2Pim_ligase"/>
</dbReference>
<dbReference type="NCBIfam" id="TIGR01085">
    <property type="entry name" value="murE"/>
    <property type="match status" value="1"/>
</dbReference>
<dbReference type="NCBIfam" id="NF001124">
    <property type="entry name" value="PRK00139.1-2"/>
    <property type="match status" value="1"/>
</dbReference>
<dbReference type="NCBIfam" id="NF001126">
    <property type="entry name" value="PRK00139.1-4"/>
    <property type="match status" value="1"/>
</dbReference>
<dbReference type="PANTHER" id="PTHR23135">
    <property type="entry name" value="MUR LIGASE FAMILY MEMBER"/>
    <property type="match status" value="1"/>
</dbReference>
<dbReference type="PANTHER" id="PTHR23135:SF4">
    <property type="entry name" value="UDP-N-ACETYLMURAMOYL-L-ALANYL-D-GLUTAMATE--2,6-DIAMINOPIMELATE LIGASE MURE HOMOLOG, CHLOROPLASTIC"/>
    <property type="match status" value="1"/>
</dbReference>
<dbReference type="Pfam" id="PF01225">
    <property type="entry name" value="Mur_ligase"/>
    <property type="match status" value="1"/>
</dbReference>
<dbReference type="Pfam" id="PF02875">
    <property type="entry name" value="Mur_ligase_C"/>
    <property type="match status" value="1"/>
</dbReference>
<dbReference type="Pfam" id="PF08245">
    <property type="entry name" value="Mur_ligase_M"/>
    <property type="match status" value="1"/>
</dbReference>
<dbReference type="SUPFAM" id="SSF53623">
    <property type="entry name" value="MurD-like peptide ligases, catalytic domain"/>
    <property type="match status" value="1"/>
</dbReference>
<dbReference type="SUPFAM" id="SSF53244">
    <property type="entry name" value="MurD-like peptide ligases, peptide-binding domain"/>
    <property type="match status" value="1"/>
</dbReference>
<dbReference type="SUPFAM" id="SSF63418">
    <property type="entry name" value="MurE/MurF N-terminal domain"/>
    <property type="match status" value="1"/>
</dbReference>
<sequence>MKITDLAGSNFPELSAQLKGDAATIEIGGITADSRQVKPGDLFVAVAGSKADGAAYIADALSRGASAVVAGTGTPAEAGAPVFAISDPRRFLAKAASSFYGRQPETMVAVTGTAGKTSVASFTRQIWAHSGFSAAMIGTTGVVAPGRTEYGSLTTPDPVSLHKLLAELADEGVTHAAMEASSHGLDQRRLDGVELAAAAFTNLGRDHMDYHPTVEHYMASKMRLFGALLPKGSPAVIFADDQWSAEAIAAARKAGHDVRTVGRNGDFIALKRVEHFRHKQSAEVHVGDDIYEIHVPLAGDFQIANALVAAGLAMSTGITAKAAFSALERLQGASGRLELVGQTKDGALAYVDYAHKPDALANVLESVRPFTTGRVVVVFGCGGDRDKGKRPIMGEIASRLADVVIVTDDNPRSEVPEVIRAEIMAAAKGATEIGDRAEAIRAAVGMLKTGDTLIVAGKGHEEGQTVGSVTLPFSDHAEVRKALGGL</sequence>
<feature type="chain" id="PRO_0000101931" description="UDP-N-acetylmuramoyl-L-alanyl-D-glutamate--2,6-diaminopimelate ligase">
    <location>
        <begin position="1"/>
        <end position="486"/>
    </location>
</feature>
<feature type="short sequence motif" description="Meso-diaminopimelate recognition motif">
    <location>
        <begin position="409"/>
        <end position="412"/>
    </location>
</feature>
<feature type="binding site" evidence="1">
    <location>
        <position position="34"/>
    </location>
    <ligand>
        <name>UDP-N-acetyl-alpha-D-muramoyl-L-alanyl-D-glutamate</name>
        <dbReference type="ChEBI" id="CHEBI:83900"/>
    </ligand>
</feature>
<feature type="binding site" evidence="1">
    <location>
        <begin position="112"/>
        <end position="118"/>
    </location>
    <ligand>
        <name>ATP</name>
        <dbReference type="ChEBI" id="CHEBI:30616"/>
    </ligand>
</feature>
<feature type="binding site" evidence="1">
    <location>
        <begin position="154"/>
        <end position="155"/>
    </location>
    <ligand>
        <name>UDP-N-acetyl-alpha-D-muramoyl-L-alanyl-D-glutamate</name>
        <dbReference type="ChEBI" id="CHEBI:83900"/>
    </ligand>
</feature>
<feature type="binding site" evidence="1">
    <location>
        <position position="181"/>
    </location>
    <ligand>
        <name>UDP-N-acetyl-alpha-D-muramoyl-L-alanyl-D-glutamate</name>
        <dbReference type="ChEBI" id="CHEBI:83900"/>
    </ligand>
</feature>
<feature type="binding site" evidence="1">
    <location>
        <position position="187"/>
    </location>
    <ligand>
        <name>UDP-N-acetyl-alpha-D-muramoyl-L-alanyl-D-glutamate</name>
        <dbReference type="ChEBI" id="CHEBI:83900"/>
    </ligand>
</feature>
<feature type="binding site" evidence="1">
    <location>
        <position position="189"/>
    </location>
    <ligand>
        <name>UDP-N-acetyl-alpha-D-muramoyl-L-alanyl-D-glutamate</name>
        <dbReference type="ChEBI" id="CHEBI:83900"/>
    </ligand>
</feature>
<feature type="binding site" evidence="1">
    <location>
        <position position="385"/>
    </location>
    <ligand>
        <name>meso-2,6-diaminopimelate</name>
        <dbReference type="ChEBI" id="CHEBI:57791"/>
    </ligand>
</feature>
<feature type="binding site" evidence="1">
    <location>
        <begin position="409"/>
        <end position="412"/>
    </location>
    <ligand>
        <name>meso-2,6-diaminopimelate</name>
        <dbReference type="ChEBI" id="CHEBI:57791"/>
    </ligand>
</feature>
<feature type="binding site" evidence="1">
    <location>
        <position position="457"/>
    </location>
    <ligand>
        <name>meso-2,6-diaminopimelate</name>
        <dbReference type="ChEBI" id="CHEBI:57791"/>
    </ligand>
</feature>
<feature type="binding site" evidence="1">
    <location>
        <position position="461"/>
    </location>
    <ligand>
        <name>meso-2,6-diaminopimelate</name>
        <dbReference type="ChEBI" id="CHEBI:57791"/>
    </ligand>
</feature>
<feature type="modified residue" description="N6-carboxylysine" evidence="1">
    <location>
        <position position="221"/>
    </location>
</feature>
<reference key="1">
    <citation type="journal article" date="2001" name="Proc. Natl. Acad. Sci. U.S.A.">
        <title>Analysis of the chromosome sequence of the legume symbiont Sinorhizobium meliloti strain 1021.</title>
        <authorList>
            <person name="Capela D."/>
            <person name="Barloy-Hubler F."/>
            <person name="Gouzy J."/>
            <person name="Bothe G."/>
            <person name="Ampe F."/>
            <person name="Batut J."/>
            <person name="Boistard P."/>
            <person name="Becker A."/>
            <person name="Boutry M."/>
            <person name="Cadieu E."/>
            <person name="Dreano S."/>
            <person name="Gloux S."/>
            <person name="Godrie T."/>
            <person name="Goffeau A."/>
            <person name="Kahn D."/>
            <person name="Kiss E."/>
            <person name="Lelaure V."/>
            <person name="Masuy D."/>
            <person name="Pohl T."/>
            <person name="Portetelle D."/>
            <person name="Puehler A."/>
            <person name="Purnelle B."/>
            <person name="Ramsperger U."/>
            <person name="Renard C."/>
            <person name="Thebault P."/>
            <person name="Vandenbol M."/>
            <person name="Weidner S."/>
            <person name="Galibert F."/>
        </authorList>
    </citation>
    <scope>NUCLEOTIDE SEQUENCE [LARGE SCALE GENOMIC DNA]</scope>
    <source>
        <strain>1021</strain>
    </source>
</reference>
<reference key="2">
    <citation type="journal article" date="2001" name="Science">
        <title>The composite genome of the legume symbiont Sinorhizobium meliloti.</title>
        <authorList>
            <person name="Galibert F."/>
            <person name="Finan T.M."/>
            <person name="Long S.R."/>
            <person name="Puehler A."/>
            <person name="Abola P."/>
            <person name="Ampe F."/>
            <person name="Barloy-Hubler F."/>
            <person name="Barnett M.J."/>
            <person name="Becker A."/>
            <person name="Boistard P."/>
            <person name="Bothe G."/>
            <person name="Boutry M."/>
            <person name="Bowser L."/>
            <person name="Buhrmester J."/>
            <person name="Cadieu E."/>
            <person name="Capela D."/>
            <person name="Chain P."/>
            <person name="Cowie A."/>
            <person name="Davis R.W."/>
            <person name="Dreano S."/>
            <person name="Federspiel N.A."/>
            <person name="Fisher R.F."/>
            <person name="Gloux S."/>
            <person name="Godrie T."/>
            <person name="Goffeau A."/>
            <person name="Golding B."/>
            <person name="Gouzy J."/>
            <person name="Gurjal M."/>
            <person name="Hernandez-Lucas I."/>
            <person name="Hong A."/>
            <person name="Huizar L."/>
            <person name="Hyman R.W."/>
            <person name="Jones T."/>
            <person name="Kahn D."/>
            <person name="Kahn M.L."/>
            <person name="Kalman S."/>
            <person name="Keating D.H."/>
            <person name="Kiss E."/>
            <person name="Komp C."/>
            <person name="Lelaure V."/>
            <person name="Masuy D."/>
            <person name="Palm C."/>
            <person name="Peck M.C."/>
            <person name="Pohl T.M."/>
            <person name="Portetelle D."/>
            <person name="Purnelle B."/>
            <person name="Ramsperger U."/>
            <person name="Surzycki R."/>
            <person name="Thebault P."/>
            <person name="Vandenbol M."/>
            <person name="Vorhoelter F.J."/>
            <person name="Weidner S."/>
            <person name="Wells D.H."/>
            <person name="Wong K."/>
            <person name="Yeh K.-C."/>
            <person name="Batut J."/>
        </authorList>
    </citation>
    <scope>NUCLEOTIDE SEQUENCE [LARGE SCALE GENOMIC DNA]</scope>
    <source>
        <strain>1021</strain>
    </source>
</reference>
<comment type="function">
    <text evidence="1">Catalyzes the addition of meso-diaminopimelic acid to the nucleotide precursor UDP-N-acetylmuramoyl-L-alanyl-D-glutamate (UMAG) in the biosynthesis of bacterial cell-wall peptidoglycan.</text>
</comment>
<comment type="catalytic activity">
    <reaction evidence="1">
        <text>UDP-N-acetyl-alpha-D-muramoyl-L-alanyl-D-glutamate + meso-2,6-diaminopimelate + ATP = UDP-N-acetyl-alpha-D-muramoyl-L-alanyl-gamma-D-glutamyl-meso-2,6-diaminopimelate + ADP + phosphate + H(+)</text>
        <dbReference type="Rhea" id="RHEA:23676"/>
        <dbReference type="ChEBI" id="CHEBI:15378"/>
        <dbReference type="ChEBI" id="CHEBI:30616"/>
        <dbReference type="ChEBI" id="CHEBI:43474"/>
        <dbReference type="ChEBI" id="CHEBI:57791"/>
        <dbReference type="ChEBI" id="CHEBI:83900"/>
        <dbReference type="ChEBI" id="CHEBI:83905"/>
        <dbReference type="ChEBI" id="CHEBI:456216"/>
        <dbReference type="EC" id="6.3.2.13"/>
    </reaction>
</comment>
<comment type="cofactor">
    <cofactor evidence="1">
        <name>Mg(2+)</name>
        <dbReference type="ChEBI" id="CHEBI:18420"/>
    </cofactor>
</comment>
<comment type="pathway">
    <text evidence="1">Cell wall biogenesis; peptidoglycan biosynthesis.</text>
</comment>
<comment type="subcellular location">
    <subcellularLocation>
        <location evidence="1">Cytoplasm</location>
    </subcellularLocation>
</comment>
<comment type="PTM">
    <text evidence="1">Carboxylation is probably crucial for Mg(2+) binding and, consequently, for the gamma-phosphate positioning of ATP.</text>
</comment>
<comment type="similarity">
    <text evidence="1">Belongs to the MurCDEF family. MurE subfamily.</text>
</comment>
<proteinExistence type="inferred from homology"/>
<accession>Q92NL6</accession>
<gene>
    <name evidence="1" type="primary">murE</name>
    <name type="ordered locus">R02181</name>
    <name type="ORF">SMc01861</name>
</gene>
<organism>
    <name type="scientific">Rhizobium meliloti (strain 1021)</name>
    <name type="common">Ensifer meliloti</name>
    <name type="synonym">Sinorhizobium meliloti</name>
    <dbReference type="NCBI Taxonomy" id="266834"/>
    <lineage>
        <taxon>Bacteria</taxon>
        <taxon>Pseudomonadati</taxon>
        <taxon>Pseudomonadota</taxon>
        <taxon>Alphaproteobacteria</taxon>
        <taxon>Hyphomicrobiales</taxon>
        <taxon>Rhizobiaceae</taxon>
        <taxon>Sinorhizobium/Ensifer group</taxon>
        <taxon>Sinorhizobium</taxon>
    </lineage>
</organism>
<keyword id="KW-0067">ATP-binding</keyword>
<keyword id="KW-0131">Cell cycle</keyword>
<keyword id="KW-0132">Cell division</keyword>
<keyword id="KW-0133">Cell shape</keyword>
<keyword id="KW-0961">Cell wall biogenesis/degradation</keyword>
<keyword id="KW-0963">Cytoplasm</keyword>
<keyword id="KW-0436">Ligase</keyword>
<keyword id="KW-0460">Magnesium</keyword>
<keyword id="KW-0547">Nucleotide-binding</keyword>
<keyword id="KW-0573">Peptidoglycan synthesis</keyword>
<keyword id="KW-1185">Reference proteome</keyword>
<evidence type="ECO:0000255" key="1">
    <source>
        <dbReference type="HAMAP-Rule" id="MF_00208"/>
    </source>
</evidence>
<protein>
    <recommendedName>
        <fullName evidence="1">UDP-N-acetylmuramoyl-L-alanyl-D-glutamate--2,6-diaminopimelate ligase</fullName>
        <ecNumber evidence="1">6.3.2.13</ecNumber>
    </recommendedName>
    <alternativeName>
        <fullName evidence="1">Meso-A2pm-adding enzyme</fullName>
    </alternativeName>
    <alternativeName>
        <fullName evidence="1">Meso-diaminopimelate-adding enzyme</fullName>
    </alternativeName>
    <alternativeName>
        <fullName evidence="1">UDP-MurNAc-L-Ala-D-Glu:meso-diaminopimelate ligase</fullName>
    </alternativeName>
    <alternativeName>
        <fullName evidence="1">UDP-MurNAc-tripeptide synthetase</fullName>
    </alternativeName>
    <alternativeName>
        <fullName evidence="1">UDP-N-acetylmuramyl-tripeptide synthetase</fullName>
    </alternativeName>
</protein>
<name>MURE_RHIME</name>